<reference key="1">
    <citation type="journal article" date="2002" name="DNA Res.">
        <title>Complete genome structure of the thermophilic cyanobacterium Thermosynechococcus elongatus BP-1.</title>
        <authorList>
            <person name="Nakamura Y."/>
            <person name="Kaneko T."/>
            <person name="Sato S."/>
            <person name="Ikeuchi M."/>
            <person name="Katoh H."/>
            <person name="Sasamoto S."/>
            <person name="Watanabe A."/>
            <person name="Iriguchi M."/>
            <person name="Kawashima K."/>
            <person name="Kimura T."/>
            <person name="Kishida Y."/>
            <person name="Kiyokawa C."/>
            <person name="Kohara M."/>
            <person name="Matsumoto M."/>
            <person name="Matsuno A."/>
            <person name="Nakazaki N."/>
            <person name="Shimpo S."/>
            <person name="Sugimoto M."/>
            <person name="Takeuchi C."/>
            <person name="Yamada M."/>
            <person name="Tabata S."/>
        </authorList>
    </citation>
    <scope>NUCLEOTIDE SEQUENCE [LARGE SCALE GENOMIC DNA]</scope>
    <source>
        <strain>NIES-2133 / IAM M-273 / BP-1</strain>
    </source>
</reference>
<comment type="function">
    <text evidence="1">Involved in urease metallocenter assembly. Binds nickel. Probably functions as a nickel donor during metallocenter assembly.</text>
</comment>
<comment type="subcellular location">
    <subcellularLocation>
        <location evidence="1">Cytoplasm</location>
    </subcellularLocation>
</comment>
<comment type="similarity">
    <text evidence="1">Belongs to the UreE family.</text>
</comment>
<name>UREE_THEVB</name>
<accession>Q8DJ62</accession>
<keyword id="KW-0143">Chaperone</keyword>
<keyword id="KW-0963">Cytoplasm</keyword>
<keyword id="KW-0533">Nickel</keyword>
<keyword id="KW-0996">Nickel insertion</keyword>
<keyword id="KW-1185">Reference proteome</keyword>
<sequence length="144" mass="16286">MFTLTQLCPTPLENARQLHLSLTAEERCRRRLHCHSDEGESLYLKLPRGITLQPGDRLRDEDATVIVTVHAKPEPTLKVMASTPLDLLRAAYHLGNRHVPLEIHTDYLRLGADSVVQTMLEQRGLTVTFEVAPFCPERGAYHAH</sequence>
<proteinExistence type="inferred from homology"/>
<protein>
    <recommendedName>
        <fullName evidence="1">Urease accessory protein UreE</fullName>
    </recommendedName>
</protein>
<feature type="chain" id="PRO_0000223449" description="Urease accessory protein UreE">
    <location>
        <begin position="1"/>
        <end position="144"/>
    </location>
</feature>
<dbReference type="EMBL" id="BA000039">
    <property type="protein sequence ID" value="BAC08918.1"/>
    <property type="molecule type" value="Genomic_DNA"/>
</dbReference>
<dbReference type="RefSeq" id="NP_682156.1">
    <property type="nucleotide sequence ID" value="NC_004113.1"/>
</dbReference>
<dbReference type="RefSeq" id="WP_011057206.1">
    <property type="nucleotide sequence ID" value="NC_004113.1"/>
</dbReference>
<dbReference type="SMR" id="Q8DJ62"/>
<dbReference type="STRING" id="197221.gene:10747964"/>
<dbReference type="EnsemblBacteria" id="BAC08918">
    <property type="protein sequence ID" value="BAC08918"/>
    <property type="gene ID" value="BAC08918"/>
</dbReference>
<dbReference type="KEGG" id="tel:tll1366"/>
<dbReference type="PATRIC" id="fig|197221.4.peg.1435"/>
<dbReference type="eggNOG" id="COG2371">
    <property type="taxonomic scope" value="Bacteria"/>
</dbReference>
<dbReference type="Proteomes" id="UP000000440">
    <property type="component" value="Chromosome"/>
</dbReference>
<dbReference type="GO" id="GO:0005737">
    <property type="term" value="C:cytoplasm"/>
    <property type="evidence" value="ECO:0007669"/>
    <property type="project" value="UniProtKB-SubCell"/>
</dbReference>
<dbReference type="GO" id="GO:0016151">
    <property type="term" value="F:nickel cation binding"/>
    <property type="evidence" value="ECO:0007669"/>
    <property type="project" value="UniProtKB-UniRule"/>
</dbReference>
<dbReference type="GO" id="GO:0051082">
    <property type="term" value="F:unfolded protein binding"/>
    <property type="evidence" value="ECO:0007669"/>
    <property type="project" value="UniProtKB-UniRule"/>
</dbReference>
<dbReference type="GO" id="GO:0006457">
    <property type="term" value="P:protein folding"/>
    <property type="evidence" value="ECO:0007669"/>
    <property type="project" value="InterPro"/>
</dbReference>
<dbReference type="GO" id="GO:0065003">
    <property type="term" value="P:protein-containing complex assembly"/>
    <property type="evidence" value="ECO:0007669"/>
    <property type="project" value="InterPro"/>
</dbReference>
<dbReference type="GO" id="GO:0019627">
    <property type="term" value="P:urea metabolic process"/>
    <property type="evidence" value="ECO:0007669"/>
    <property type="project" value="InterPro"/>
</dbReference>
<dbReference type="CDD" id="cd00571">
    <property type="entry name" value="UreE"/>
    <property type="match status" value="1"/>
</dbReference>
<dbReference type="Gene3D" id="2.60.260.20">
    <property type="entry name" value="Urease metallochaperone UreE, N-terminal domain"/>
    <property type="match status" value="1"/>
</dbReference>
<dbReference type="Gene3D" id="3.30.70.790">
    <property type="entry name" value="UreE, C-terminal domain"/>
    <property type="match status" value="1"/>
</dbReference>
<dbReference type="HAMAP" id="MF_00822">
    <property type="entry name" value="UreE"/>
    <property type="match status" value="1"/>
</dbReference>
<dbReference type="InterPro" id="IPR012406">
    <property type="entry name" value="UreE"/>
</dbReference>
<dbReference type="InterPro" id="IPR007864">
    <property type="entry name" value="UreE_C_dom"/>
</dbReference>
<dbReference type="InterPro" id="IPR004029">
    <property type="entry name" value="UreE_N"/>
</dbReference>
<dbReference type="InterPro" id="IPR036118">
    <property type="entry name" value="UreE_N_sf"/>
</dbReference>
<dbReference type="NCBIfam" id="NF009751">
    <property type="entry name" value="PRK13261.1-1"/>
    <property type="match status" value="1"/>
</dbReference>
<dbReference type="Pfam" id="PF05194">
    <property type="entry name" value="UreE_C"/>
    <property type="match status" value="1"/>
</dbReference>
<dbReference type="Pfam" id="PF02814">
    <property type="entry name" value="UreE_N"/>
    <property type="match status" value="1"/>
</dbReference>
<dbReference type="PIRSF" id="PIRSF036402">
    <property type="entry name" value="Ureas_acces_UreE"/>
    <property type="match status" value="1"/>
</dbReference>
<dbReference type="SMART" id="SM00988">
    <property type="entry name" value="UreE_N"/>
    <property type="match status" value="1"/>
</dbReference>
<dbReference type="SUPFAM" id="SSF69737">
    <property type="entry name" value="Urease metallochaperone UreE, C-terminal domain"/>
    <property type="match status" value="1"/>
</dbReference>
<dbReference type="SUPFAM" id="SSF69287">
    <property type="entry name" value="Urease metallochaperone UreE, N-terminal domain"/>
    <property type="match status" value="1"/>
</dbReference>
<evidence type="ECO:0000255" key="1">
    <source>
        <dbReference type="HAMAP-Rule" id="MF_00822"/>
    </source>
</evidence>
<organism>
    <name type="scientific">Thermosynechococcus vestitus (strain NIES-2133 / IAM M-273 / BP-1)</name>
    <dbReference type="NCBI Taxonomy" id="197221"/>
    <lineage>
        <taxon>Bacteria</taxon>
        <taxon>Bacillati</taxon>
        <taxon>Cyanobacteriota</taxon>
        <taxon>Cyanophyceae</taxon>
        <taxon>Acaryochloridales</taxon>
        <taxon>Thermosynechococcaceae</taxon>
        <taxon>Thermosynechococcus</taxon>
    </lineage>
</organism>
<gene>
    <name evidence="1" type="primary">ureE</name>
    <name type="ordered locus">tll1366</name>
</gene>